<reference key="1">
    <citation type="journal article" date="2006" name="Proc. Natl. Acad. Sci. U.S.A.">
        <title>Molecular genetic anatomy of inter- and intraserotype variation in the human bacterial pathogen group A Streptococcus.</title>
        <authorList>
            <person name="Beres S.B."/>
            <person name="Richter E.W."/>
            <person name="Nagiec M.J."/>
            <person name="Sumby P."/>
            <person name="Porcella S.F."/>
            <person name="DeLeo F.R."/>
            <person name="Musser J.M."/>
        </authorList>
    </citation>
    <scope>NUCLEOTIDE SEQUENCE [LARGE SCALE GENOMIC DNA]</scope>
    <source>
        <strain>MGAS9429</strain>
    </source>
</reference>
<feature type="chain" id="PRO_1000010458" description="Heat-inducible transcription repressor HrcA">
    <location>
        <begin position="1"/>
        <end position="344"/>
    </location>
</feature>
<name>HRCA_STRPC</name>
<dbReference type="EMBL" id="CP000259">
    <property type="protein sequence ID" value="ABF32689.1"/>
    <property type="molecule type" value="Genomic_DNA"/>
</dbReference>
<dbReference type="RefSeq" id="WP_002988568.1">
    <property type="nucleotide sequence ID" value="NC_008021.1"/>
</dbReference>
<dbReference type="SMR" id="Q1JKD4"/>
<dbReference type="KEGG" id="spk:MGAS9429_Spy1502"/>
<dbReference type="HOGENOM" id="CLU_050019_1_0_9"/>
<dbReference type="Proteomes" id="UP000002433">
    <property type="component" value="Chromosome"/>
</dbReference>
<dbReference type="GO" id="GO:0003677">
    <property type="term" value="F:DNA binding"/>
    <property type="evidence" value="ECO:0007669"/>
    <property type="project" value="InterPro"/>
</dbReference>
<dbReference type="GO" id="GO:0045892">
    <property type="term" value="P:negative regulation of DNA-templated transcription"/>
    <property type="evidence" value="ECO:0007669"/>
    <property type="project" value="UniProtKB-UniRule"/>
</dbReference>
<dbReference type="Gene3D" id="3.30.450.40">
    <property type="match status" value="1"/>
</dbReference>
<dbReference type="Gene3D" id="3.30.390.60">
    <property type="entry name" value="Heat-inducible transcription repressor hrca homolog, domain 3"/>
    <property type="match status" value="1"/>
</dbReference>
<dbReference type="Gene3D" id="1.10.10.10">
    <property type="entry name" value="Winged helix-like DNA-binding domain superfamily/Winged helix DNA-binding domain"/>
    <property type="match status" value="1"/>
</dbReference>
<dbReference type="HAMAP" id="MF_00081">
    <property type="entry name" value="HrcA"/>
    <property type="match status" value="1"/>
</dbReference>
<dbReference type="InterPro" id="IPR029016">
    <property type="entry name" value="GAF-like_dom_sf"/>
</dbReference>
<dbReference type="InterPro" id="IPR002571">
    <property type="entry name" value="HrcA"/>
</dbReference>
<dbReference type="InterPro" id="IPR021153">
    <property type="entry name" value="HrcA_C"/>
</dbReference>
<dbReference type="InterPro" id="IPR036388">
    <property type="entry name" value="WH-like_DNA-bd_sf"/>
</dbReference>
<dbReference type="InterPro" id="IPR036390">
    <property type="entry name" value="WH_DNA-bd_sf"/>
</dbReference>
<dbReference type="InterPro" id="IPR005104">
    <property type="entry name" value="WHTH_HrcA_DNA-bd"/>
</dbReference>
<dbReference type="InterPro" id="IPR023120">
    <property type="entry name" value="WHTH_transcript_rep_HrcA_IDD"/>
</dbReference>
<dbReference type="NCBIfam" id="TIGR00331">
    <property type="entry name" value="hrcA"/>
    <property type="match status" value="1"/>
</dbReference>
<dbReference type="PANTHER" id="PTHR34824">
    <property type="entry name" value="HEAT-INDUCIBLE TRANSCRIPTION REPRESSOR HRCA"/>
    <property type="match status" value="1"/>
</dbReference>
<dbReference type="PANTHER" id="PTHR34824:SF1">
    <property type="entry name" value="HEAT-INDUCIBLE TRANSCRIPTION REPRESSOR HRCA"/>
    <property type="match status" value="1"/>
</dbReference>
<dbReference type="Pfam" id="PF01628">
    <property type="entry name" value="HrcA"/>
    <property type="match status" value="1"/>
</dbReference>
<dbReference type="Pfam" id="PF03444">
    <property type="entry name" value="HrcA_DNA-bdg"/>
    <property type="match status" value="1"/>
</dbReference>
<dbReference type="PIRSF" id="PIRSF005485">
    <property type="entry name" value="HrcA"/>
    <property type="match status" value="1"/>
</dbReference>
<dbReference type="SUPFAM" id="SSF55781">
    <property type="entry name" value="GAF domain-like"/>
    <property type="match status" value="1"/>
</dbReference>
<dbReference type="SUPFAM" id="SSF46785">
    <property type="entry name" value="Winged helix' DNA-binding domain"/>
    <property type="match status" value="1"/>
</dbReference>
<comment type="function">
    <text evidence="1">Negative regulator of class I heat shock genes (grpE-dnaK-dnaJ and groELS operons). Prevents heat-shock induction of these operons.</text>
</comment>
<comment type="similarity">
    <text evidence="1">Belongs to the HrcA family.</text>
</comment>
<gene>
    <name evidence="1" type="primary">hrcA</name>
    <name type="ordered locus">MGAS9429_Spy1502</name>
</gene>
<evidence type="ECO:0000255" key="1">
    <source>
        <dbReference type="HAMAP-Rule" id="MF_00081"/>
    </source>
</evidence>
<proteinExistence type="inferred from homology"/>
<organism>
    <name type="scientific">Streptococcus pyogenes serotype M12 (strain MGAS9429)</name>
    <dbReference type="NCBI Taxonomy" id="370551"/>
    <lineage>
        <taxon>Bacteria</taxon>
        <taxon>Bacillati</taxon>
        <taxon>Bacillota</taxon>
        <taxon>Bacilli</taxon>
        <taxon>Lactobacillales</taxon>
        <taxon>Streptococcaceae</taxon>
        <taxon>Streptococcus</taxon>
    </lineage>
</organism>
<keyword id="KW-0678">Repressor</keyword>
<keyword id="KW-0346">Stress response</keyword>
<keyword id="KW-0804">Transcription</keyword>
<keyword id="KW-0805">Transcription regulation</keyword>
<sequence>MITQRQNDILNLIVELFTQTHEPVGSKALQRTIDSSSATIRNDMAKLEKLGLLEKAHTSSGRMPSPAGFKYFVEHSLRLDSIDEQDIYHVIKAFDFEAFKLEDMLQKASHILAEMTGYTSVILDVEPARQRLTGFDVVQLSNHDALAVMTLDESKPVTVQFAIPRNFLTRDLIAFKAIVEERLLDNSVIDIHYKLRTEIPQIVQKYFVTTDNVLQLFDYVFSELFLETVFVAGKVNSLTYSDLSTYQFLDNEQQVAISLRQSLKEGEMASVQVADSQEAALADVSVLTHKFLIPYRGFGLLSLIGPIDMDYRRSVSLVNIIGKVLAAKLGDYYRYLNSNHYEVH</sequence>
<protein>
    <recommendedName>
        <fullName evidence="1">Heat-inducible transcription repressor HrcA</fullName>
    </recommendedName>
</protein>
<accession>Q1JKD4</accession>